<feature type="chain" id="PRO_0000101577" description="Ribosomal RNA small subunit methyltransferase A">
    <location>
        <begin position="1"/>
        <end position="284"/>
    </location>
</feature>
<feature type="binding site" evidence="1">
    <location>
        <position position="27"/>
    </location>
    <ligand>
        <name>S-adenosyl-L-methionine</name>
        <dbReference type="ChEBI" id="CHEBI:59789"/>
    </ligand>
</feature>
<feature type="binding site" evidence="1">
    <location>
        <position position="29"/>
    </location>
    <ligand>
        <name>S-adenosyl-L-methionine</name>
        <dbReference type="ChEBI" id="CHEBI:59789"/>
    </ligand>
</feature>
<feature type="binding site" evidence="1">
    <location>
        <position position="54"/>
    </location>
    <ligand>
        <name>S-adenosyl-L-methionine</name>
        <dbReference type="ChEBI" id="CHEBI:59789"/>
    </ligand>
</feature>
<feature type="binding site" evidence="1">
    <location>
        <position position="75"/>
    </location>
    <ligand>
        <name>S-adenosyl-L-methionine</name>
        <dbReference type="ChEBI" id="CHEBI:59789"/>
    </ligand>
</feature>
<feature type="binding site" evidence="1">
    <location>
        <position position="100"/>
    </location>
    <ligand>
        <name>S-adenosyl-L-methionine</name>
        <dbReference type="ChEBI" id="CHEBI:59789"/>
    </ligand>
</feature>
<feature type="binding site" evidence="1">
    <location>
        <position position="125"/>
    </location>
    <ligand>
        <name>S-adenosyl-L-methionine</name>
        <dbReference type="ChEBI" id="CHEBI:59789"/>
    </ligand>
</feature>
<name>RSMA_PARUW</name>
<accession>Q6ME80</accession>
<dbReference type="EC" id="2.1.1.182" evidence="1"/>
<dbReference type="EMBL" id="BX908798">
    <property type="protein sequence ID" value="CAF23119.1"/>
    <property type="status" value="ALT_INIT"/>
    <property type="molecule type" value="Genomic_DNA"/>
</dbReference>
<dbReference type="RefSeq" id="WP_011174945.1">
    <property type="nucleotide sequence ID" value="NC_005861.2"/>
</dbReference>
<dbReference type="SMR" id="Q6ME80"/>
<dbReference type="STRING" id="264201.pc0395"/>
<dbReference type="eggNOG" id="COG0030">
    <property type="taxonomic scope" value="Bacteria"/>
</dbReference>
<dbReference type="HOGENOM" id="CLU_041220_0_0_0"/>
<dbReference type="OrthoDB" id="9814755at2"/>
<dbReference type="Proteomes" id="UP000000529">
    <property type="component" value="Chromosome"/>
</dbReference>
<dbReference type="GO" id="GO:0005829">
    <property type="term" value="C:cytosol"/>
    <property type="evidence" value="ECO:0007669"/>
    <property type="project" value="TreeGrafter"/>
</dbReference>
<dbReference type="GO" id="GO:0052908">
    <property type="term" value="F:16S rRNA (adenine(1518)-N(6)/adenine(1519)-N(6))-dimethyltransferase activity"/>
    <property type="evidence" value="ECO:0007669"/>
    <property type="project" value="UniProtKB-EC"/>
</dbReference>
<dbReference type="GO" id="GO:0003723">
    <property type="term" value="F:RNA binding"/>
    <property type="evidence" value="ECO:0007669"/>
    <property type="project" value="UniProtKB-KW"/>
</dbReference>
<dbReference type="CDD" id="cd02440">
    <property type="entry name" value="AdoMet_MTases"/>
    <property type="match status" value="1"/>
</dbReference>
<dbReference type="FunFam" id="1.10.8.100:FF:000001">
    <property type="entry name" value="Ribosomal RNA small subunit methyltransferase A"/>
    <property type="match status" value="1"/>
</dbReference>
<dbReference type="Gene3D" id="1.10.8.100">
    <property type="entry name" value="Ribosomal RNA adenine dimethylase-like, domain 2"/>
    <property type="match status" value="1"/>
</dbReference>
<dbReference type="Gene3D" id="3.40.50.150">
    <property type="entry name" value="Vaccinia Virus protein VP39"/>
    <property type="match status" value="1"/>
</dbReference>
<dbReference type="HAMAP" id="MF_00607">
    <property type="entry name" value="16SrRNA_methyltr_A"/>
    <property type="match status" value="1"/>
</dbReference>
<dbReference type="InterPro" id="IPR001737">
    <property type="entry name" value="KsgA/Erm"/>
</dbReference>
<dbReference type="InterPro" id="IPR023165">
    <property type="entry name" value="rRNA_Ade_diMease-like_C"/>
</dbReference>
<dbReference type="InterPro" id="IPR020596">
    <property type="entry name" value="rRNA_Ade_Mease_Trfase_CS"/>
</dbReference>
<dbReference type="InterPro" id="IPR020598">
    <property type="entry name" value="rRNA_Ade_methylase_Trfase_N"/>
</dbReference>
<dbReference type="InterPro" id="IPR011530">
    <property type="entry name" value="rRNA_adenine_dimethylase"/>
</dbReference>
<dbReference type="InterPro" id="IPR029063">
    <property type="entry name" value="SAM-dependent_MTases_sf"/>
</dbReference>
<dbReference type="NCBIfam" id="TIGR00755">
    <property type="entry name" value="ksgA"/>
    <property type="match status" value="1"/>
</dbReference>
<dbReference type="PANTHER" id="PTHR11727">
    <property type="entry name" value="DIMETHYLADENOSINE TRANSFERASE"/>
    <property type="match status" value="1"/>
</dbReference>
<dbReference type="PANTHER" id="PTHR11727:SF7">
    <property type="entry name" value="DIMETHYLADENOSINE TRANSFERASE-RELATED"/>
    <property type="match status" value="1"/>
</dbReference>
<dbReference type="Pfam" id="PF00398">
    <property type="entry name" value="RrnaAD"/>
    <property type="match status" value="1"/>
</dbReference>
<dbReference type="SMART" id="SM00650">
    <property type="entry name" value="rADc"/>
    <property type="match status" value="1"/>
</dbReference>
<dbReference type="SUPFAM" id="SSF53335">
    <property type="entry name" value="S-adenosyl-L-methionine-dependent methyltransferases"/>
    <property type="match status" value="1"/>
</dbReference>
<dbReference type="PROSITE" id="PS01131">
    <property type="entry name" value="RRNA_A_DIMETH"/>
    <property type="match status" value="1"/>
</dbReference>
<dbReference type="PROSITE" id="PS51689">
    <property type="entry name" value="SAM_RNA_A_N6_MT"/>
    <property type="match status" value="1"/>
</dbReference>
<gene>
    <name evidence="1" type="primary">rsmA</name>
    <name evidence="1" type="synonym">ksgA</name>
    <name type="ordered locus">pc0395</name>
</gene>
<reference key="1">
    <citation type="journal article" date="2004" name="Science">
        <title>Illuminating the evolutionary history of chlamydiae.</title>
        <authorList>
            <person name="Horn M."/>
            <person name="Collingro A."/>
            <person name="Schmitz-Esser S."/>
            <person name="Beier C.L."/>
            <person name="Purkhold U."/>
            <person name="Fartmann B."/>
            <person name="Brandt P."/>
            <person name="Nyakatura G.J."/>
            <person name="Droege M."/>
            <person name="Frishman D."/>
            <person name="Rattei T."/>
            <person name="Mewes H.-W."/>
            <person name="Wagner M."/>
        </authorList>
    </citation>
    <scope>NUCLEOTIDE SEQUENCE [LARGE SCALE GENOMIC DNA]</scope>
    <source>
        <strain>UWE25</strain>
    </source>
</reference>
<protein>
    <recommendedName>
        <fullName evidence="1">Ribosomal RNA small subunit methyltransferase A</fullName>
        <ecNumber evidence="1">2.1.1.182</ecNumber>
    </recommendedName>
    <alternativeName>
        <fullName evidence="1">16S rRNA (adenine(1518)-N(6)/adenine(1519)-N(6))-dimethyltransferase</fullName>
    </alternativeName>
    <alternativeName>
        <fullName evidence="1">16S rRNA dimethyladenosine transferase</fullName>
    </alternativeName>
    <alternativeName>
        <fullName evidence="1">16S rRNA dimethylase</fullName>
    </alternativeName>
    <alternativeName>
        <fullName evidence="1">S-adenosylmethionine-6-N', N'-adenosyl(rRNA) dimethyltransferase</fullName>
    </alternativeName>
</protein>
<evidence type="ECO:0000255" key="1">
    <source>
        <dbReference type="HAMAP-Rule" id="MF_00607"/>
    </source>
</evidence>
<evidence type="ECO:0000305" key="2"/>
<sequence>MPIYKPSELRLFLNQLGIFPKKGLSQNFLIDGNIIRKIVRASDVQPGNLVLEIGPGPGSLTQAMLEVEAHVVAVEKDFVLARELKRFQTPSKQLEIFCEDILMFSVEEELQSRLRDDQKAKVIANLPYHLTTPILAEMVVRRKLFSSLTVMVQEEVARRMTALPGQSDYSSFTIFLNFYSKPRYGFTVSRNCFYPAPKVDSAIVVLELKEPPPNIDAQVFFKITRTAFEQRRKMLRASLKSLFDPSKISNALEIIGQNPQARPEVLSLEDFIKLYHELYSSERH</sequence>
<keyword id="KW-0963">Cytoplasm</keyword>
<keyword id="KW-0489">Methyltransferase</keyword>
<keyword id="KW-1185">Reference proteome</keyword>
<keyword id="KW-0694">RNA-binding</keyword>
<keyword id="KW-0698">rRNA processing</keyword>
<keyword id="KW-0949">S-adenosyl-L-methionine</keyword>
<keyword id="KW-0808">Transferase</keyword>
<proteinExistence type="inferred from homology"/>
<comment type="function">
    <text evidence="1">Specifically dimethylates two adjacent adenosines (A1518 and A1519) in the loop of a conserved hairpin near the 3'-end of 16S rRNA in the 30S particle. May play a critical role in biogenesis of 30S subunits.</text>
</comment>
<comment type="catalytic activity">
    <reaction evidence="1">
        <text>adenosine(1518)/adenosine(1519) in 16S rRNA + 4 S-adenosyl-L-methionine = N(6)-dimethyladenosine(1518)/N(6)-dimethyladenosine(1519) in 16S rRNA + 4 S-adenosyl-L-homocysteine + 4 H(+)</text>
        <dbReference type="Rhea" id="RHEA:19609"/>
        <dbReference type="Rhea" id="RHEA-COMP:10232"/>
        <dbReference type="Rhea" id="RHEA-COMP:10233"/>
        <dbReference type="ChEBI" id="CHEBI:15378"/>
        <dbReference type="ChEBI" id="CHEBI:57856"/>
        <dbReference type="ChEBI" id="CHEBI:59789"/>
        <dbReference type="ChEBI" id="CHEBI:74411"/>
        <dbReference type="ChEBI" id="CHEBI:74493"/>
        <dbReference type="EC" id="2.1.1.182"/>
    </reaction>
</comment>
<comment type="subcellular location">
    <subcellularLocation>
        <location evidence="1">Cytoplasm</location>
    </subcellularLocation>
</comment>
<comment type="similarity">
    <text evidence="1">Belongs to the class I-like SAM-binding methyltransferase superfamily. rRNA adenine N(6)-methyltransferase family. RsmA subfamily.</text>
</comment>
<comment type="sequence caution" evidence="2">
    <conflict type="erroneous initiation">
        <sequence resource="EMBL-CDS" id="CAF23119"/>
    </conflict>
</comment>
<organism>
    <name type="scientific">Protochlamydia amoebophila (strain UWE25)</name>
    <dbReference type="NCBI Taxonomy" id="264201"/>
    <lineage>
        <taxon>Bacteria</taxon>
        <taxon>Pseudomonadati</taxon>
        <taxon>Chlamydiota</taxon>
        <taxon>Chlamydiia</taxon>
        <taxon>Parachlamydiales</taxon>
        <taxon>Parachlamydiaceae</taxon>
        <taxon>Candidatus Protochlamydia</taxon>
    </lineage>
</organism>